<comment type="function">
    <text evidence="1">Ligates lysine onto the cytidine present at position 34 of the AUA codon-specific tRNA(Ile) that contains the anticodon CAU, in an ATP-dependent manner. Cytidine is converted to lysidine, thus changing the amino acid specificity of the tRNA from methionine to isoleucine.</text>
</comment>
<comment type="catalytic activity">
    <reaction evidence="1">
        <text>cytidine(34) in tRNA(Ile2) + L-lysine + ATP = lysidine(34) in tRNA(Ile2) + AMP + diphosphate + H(+)</text>
        <dbReference type="Rhea" id="RHEA:43744"/>
        <dbReference type="Rhea" id="RHEA-COMP:10625"/>
        <dbReference type="Rhea" id="RHEA-COMP:10670"/>
        <dbReference type="ChEBI" id="CHEBI:15378"/>
        <dbReference type="ChEBI" id="CHEBI:30616"/>
        <dbReference type="ChEBI" id="CHEBI:32551"/>
        <dbReference type="ChEBI" id="CHEBI:33019"/>
        <dbReference type="ChEBI" id="CHEBI:82748"/>
        <dbReference type="ChEBI" id="CHEBI:83665"/>
        <dbReference type="ChEBI" id="CHEBI:456215"/>
        <dbReference type="EC" id="6.3.4.19"/>
    </reaction>
</comment>
<comment type="subcellular location">
    <subcellularLocation>
        <location evidence="1">Cytoplasm</location>
    </subcellularLocation>
</comment>
<comment type="domain">
    <text>The N-terminal region contains the highly conserved SGGXDS motif, predicted to be a P-loop motif involved in ATP binding.</text>
</comment>
<comment type="similarity">
    <text evidence="1">Belongs to the tRNA(Ile)-lysidine synthase family.</text>
</comment>
<proteinExistence type="inferred from homology"/>
<sequence length="430" mass="50074">MLYEKFEYNINNLIGNFGLSKIAVAVSGGSDSVALLYLANIWAEKNNIELSVISVDHNLREQSKQETYYVQNISNSLNRKHYSLSFDHQNNFSNLQERARAGRYDLMTNLCLEFDILVLLTAHHEDDYVENFCLRLERNSGIFGLSSSNINWYNNIQIIRPLYNIPKSELVEYLVSHNIKWFEDESNSSDKYRRNIIRQKLAKGAGYIKAEIILQQLKINDLLDNKFKPELISAIAEAVKIFEYGFAFLDLVKFDKFSNEVKVQIINFLLIIISGQFRAARFYSVEPILKLITQDVNFKNTLHGCVVKRIQNELLIYREFGKKLPESKILLDKSIIWDNRFCITKNQENPDCVITYLSLEDYKTIKKQLDLAHLKDLSCKNHNAILFTLPIIKILEKVIAIPHISYYDNDMQNFEVSFAPNFVSRFTHFC</sequence>
<organism>
    <name type="scientific">Rickettsia akari (strain Hartford)</name>
    <dbReference type="NCBI Taxonomy" id="293614"/>
    <lineage>
        <taxon>Bacteria</taxon>
        <taxon>Pseudomonadati</taxon>
        <taxon>Pseudomonadota</taxon>
        <taxon>Alphaproteobacteria</taxon>
        <taxon>Rickettsiales</taxon>
        <taxon>Rickettsiaceae</taxon>
        <taxon>Rickettsieae</taxon>
        <taxon>Rickettsia</taxon>
        <taxon>spotted fever group</taxon>
    </lineage>
</organism>
<keyword id="KW-0067">ATP-binding</keyword>
<keyword id="KW-0963">Cytoplasm</keyword>
<keyword id="KW-0436">Ligase</keyword>
<keyword id="KW-0547">Nucleotide-binding</keyword>
<keyword id="KW-0819">tRNA processing</keyword>
<gene>
    <name evidence="1" type="primary">tilS</name>
    <name type="ordered locus">A1C_00355</name>
</gene>
<dbReference type="EC" id="6.3.4.19" evidence="1"/>
<dbReference type="EMBL" id="CP000847">
    <property type="protein sequence ID" value="ABV74404.1"/>
    <property type="molecule type" value="Genomic_DNA"/>
</dbReference>
<dbReference type="RefSeq" id="WP_012013274.1">
    <property type="nucleotide sequence ID" value="NC_009881.1"/>
</dbReference>
<dbReference type="SMR" id="A8GLX9"/>
<dbReference type="STRING" id="293614.A1C_00355"/>
<dbReference type="KEGG" id="rak:A1C_00355"/>
<dbReference type="eggNOG" id="COG0037">
    <property type="taxonomic scope" value="Bacteria"/>
</dbReference>
<dbReference type="HOGENOM" id="CLU_018869_3_2_5"/>
<dbReference type="Proteomes" id="UP000006830">
    <property type="component" value="Chromosome"/>
</dbReference>
<dbReference type="GO" id="GO:0005737">
    <property type="term" value="C:cytoplasm"/>
    <property type="evidence" value="ECO:0007669"/>
    <property type="project" value="UniProtKB-SubCell"/>
</dbReference>
<dbReference type="GO" id="GO:0005524">
    <property type="term" value="F:ATP binding"/>
    <property type="evidence" value="ECO:0007669"/>
    <property type="project" value="UniProtKB-UniRule"/>
</dbReference>
<dbReference type="GO" id="GO:0032267">
    <property type="term" value="F:tRNA(Ile)-lysidine synthase activity"/>
    <property type="evidence" value="ECO:0007669"/>
    <property type="project" value="UniProtKB-EC"/>
</dbReference>
<dbReference type="GO" id="GO:0006400">
    <property type="term" value="P:tRNA modification"/>
    <property type="evidence" value="ECO:0007669"/>
    <property type="project" value="UniProtKB-UniRule"/>
</dbReference>
<dbReference type="CDD" id="cd01992">
    <property type="entry name" value="TilS_N"/>
    <property type="match status" value="1"/>
</dbReference>
<dbReference type="Gene3D" id="3.40.50.620">
    <property type="entry name" value="HUPs"/>
    <property type="match status" value="1"/>
</dbReference>
<dbReference type="HAMAP" id="MF_01161">
    <property type="entry name" value="tRNA_Ile_lys_synt"/>
    <property type="match status" value="1"/>
</dbReference>
<dbReference type="InterPro" id="IPR014729">
    <property type="entry name" value="Rossmann-like_a/b/a_fold"/>
</dbReference>
<dbReference type="InterPro" id="IPR011063">
    <property type="entry name" value="TilS/TtcA_N"/>
</dbReference>
<dbReference type="InterPro" id="IPR012094">
    <property type="entry name" value="tRNA_Ile_lys_synt"/>
</dbReference>
<dbReference type="InterPro" id="IPR012795">
    <property type="entry name" value="tRNA_Ile_lys_synt_N"/>
</dbReference>
<dbReference type="NCBIfam" id="TIGR02432">
    <property type="entry name" value="lysidine_TilS_N"/>
    <property type="match status" value="1"/>
</dbReference>
<dbReference type="PANTHER" id="PTHR43033">
    <property type="entry name" value="TRNA(ILE)-LYSIDINE SYNTHASE-RELATED"/>
    <property type="match status" value="1"/>
</dbReference>
<dbReference type="PANTHER" id="PTHR43033:SF1">
    <property type="entry name" value="TRNA(ILE)-LYSIDINE SYNTHASE-RELATED"/>
    <property type="match status" value="1"/>
</dbReference>
<dbReference type="Pfam" id="PF01171">
    <property type="entry name" value="ATP_bind_3"/>
    <property type="match status" value="1"/>
</dbReference>
<dbReference type="SUPFAM" id="SSF52402">
    <property type="entry name" value="Adenine nucleotide alpha hydrolases-like"/>
    <property type="match status" value="1"/>
</dbReference>
<protein>
    <recommendedName>
        <fullName evidence="1">tRNA(Ile)-lysidine synthase</fullName>
        <ecNumber evidence="1">6.3.4.19</ecNumber>
    </recommendedName>
    <alternativeName>
        <fullName evidence="1">tRNA(Ile)-2-lysyl-cytidine synthase</fullName>
    </alternativeName>
    <alternativeName>
        <fullName evidence="1">tRNA(Ile)-lysidine synthetase</fullName>
    </alternativeName>
</protein>
<accession>A8GLX9</accession>
<evidence type="ECO:0000255" key="1">
    <source>
        <dbReference type="HAMAP-Rule" id="MF_01161"/>
    </source>
</evidence>
<name>TILS_RICAH</name>
<reference key="1">
    <citation type="submission" date="2007-09" db="EMBL/GenBank/DDBJ databases">
        <title>Complete genome sequence of Rickettsia akari.</title>
        <authorList>
            <person name="Madan A."/>
            <person name="Fahey J."/>
            <person name="Helton E."/>
            <person name="Ketteman M."/>
            <person name="Madan A."/>
            <person name="Rodrigues S."/>
            <person name="Sanchez A."/>
            <person name="Whiting M."/>
            <person name="Dasch G."/>
            <person name="Eremeeva M."/>
        </authorList>
    </citation>
    <scope>NUCLEOTIDE SEQUENCE [LARGE SCALE GENOMIC DNA]</scope>
    <source>
        <strain>Hartford</strain>
    </source>
</reference>
<feature type="chain" id="PRO_1000065623" description="tRNA(Ile)-lysidine synthase">
    <location>
        <begin position="1"/>
        <end position="430"/>
    </location>
</feature>
<feature type="binding site" evidence="1">
    <location>
        <begin position="27"/>
        <end position="32"/>
    </location>
    <ligand>
        <name>ATP</name>
        <dbReference type="ChEBI" id="CHEBI:30616"/>
    </ligand>
</feature>